<reference key="1">
    <citation type="journal article" date="2005" name="Nucleic Acids Res.">
        <title>Genome dynamics and diversity of Shigella species, the etiologic agents of bacillary dysentery.</title>
        <authorList>
            <person name="Yang F."/>
            <person name="Yang J."/>
            <person name="Zhang X."/>
            <person name="Chen L."/>
            <person name="Jiang Y."/>
            <person name="Yan Y."/>
            <person name="Tang X."/>
            <person name="Wang J."/>
            <person name="Xiong Z."/>
            <person name="Dong J."/>
            <person name="Xue Y."/>
            <person name="Zhu Y."/>
            <person name="Xu X."/>
            <person name="Sun L."/>
            <person name="Chen S."/>
            <person name="Nie H."/>
            <person name="Peng J."/>
            <person name="Xu J."/>
            <person name="Wang Y."/>
            <person name="Yuan Z."/>
            <person name="Wen Y."/>
            <person name="Yao Z."/>
            <person name="Shen Y."/>
            <person name="Qiang B."/>
            <person name="Hou Y."/>
            <person name="Yu J."/>
            <person name="Jin Q."/>
        </authorList>
    </citation>
    <scope>NUCLEOTIDE SEQUENCE [LARGE SCALE GENOMIC DNA]</scope>
    <source>
        <strain>Ss046</strain>
    </source>
</reference>
<comment type="function">
    <text evidence="1">Involved in the regulation of the intracellular balance of NAD and NADP, and is a key enzyme in the biosynthesis of NADP. Catalyzes specifically the phosphorylation on 2'-hydroxyl of the adenosine moiety of NAD to yield NADP.</text>
</comment>
<comment type="catalytic activity">
    <reaction evidence="1">
        <text>NAD(+) + ATP = ADP + NADP(+) + H(+)</text>
        <dbReference type="Rhea" id="RHEA:18629"/>
        <dbReference type="ChEBI" id="CHEBI:15378"/>
        <dbReference type="ChEBI" id="CHEBI:30616"/>
        <dbReference type="ChEBI" id="CHEBI:57540"/>
        <dbReference type="ChEBI" id="CHEBI:58349"/>
        <dbReference type="ChEBI" id="CHEBI:456216"/>
        <dbReference type="EC" id="2.7.1.23"/>
    </reaction>
</comment>
<comment type="cofactor">
    <cofactor evidence="1">
        <name>a divalent metal cation</name>
        <dbReference type="ChEBI" id="CHEBI:60240"/>
    </cofactor>
</comment>
<comment type="subcellular location">
    <subcellularLocation>
        <location evidence="1">Cytoplasm</location>
    </subcellularLocation>
</comment>
<comment type="similarity">
    <text evidence="1">Belongs to the NAD kinase family.</text>
</comment>
<sequence length="292" mass="32566">MNNHFKCIGIVGHPRHPTALTTHEMLYRWLCTKGYEVIVEQQIAHELQLKNVKTGTLAEIGQLADLAVVVGGDGNMLGAARTLARYDIKVIGINRGNLGFLTDLDPDNAQQQLADVLEGHYISEKRFLLEAQVCQQDCQKRISTAINEVVLHPGKVAHMIEFEVYIDEIFAFSQRSDGLIISTPTGSTAYSLSAGGPILTPSLDAITLVPMFPHTLSARPLVINSSSTIRLRFSHRRNDLEISCDSQIALPIQEGEDVLIRRCDYHLNLIHPKDYSYFNTLSTKLGWSKKLF</sequence>
<accession>Q3YYM4</accession>
<keyword id="KW-0067">ATP-binding</keyword>
<keyword id="KW-0963">Cytoplasm</keyword>
<keyword id="KW-0418">Kinase</keyword>
<keyword id="KW-0520">NAD</keyword>
<keyword id="KW-0521">NADP</keyword>
<keyword id="KW-0547">Nucleotide-binding</keyword>
<keyword id="KW-1185">Reference proteome</keyword>
<keyword id="KW-0808">Transferase</keyword>
<feature type="chain" id="PRO_0000229689" description="NAD kinase">
    <location>
        <begin position="1"/>
        <end position="292"/>
    </location>
</feature>
<feature type="active site" description="Proton acceptor" evidence="1">
    <location>
        <position position="73"/>
    </location>
</feature>
<feature type="binding site" evidence="1">
    <location>
        <begin position="73"/>
        <end position="74"/>
    </location>
    <ligand>
        <name>NAD(+)</name>
        <dbReference type="ChEBI" id="CHEBI:57540"/>
    </ligand>
</feature>
<feature type="binding site" evidence="1">
    <location>
        <begin position="147"/>
        <end position="148"/>
    </location>
    <ligand>
        <name>NAD(+)</name>
        <dbReference type="ChEBI" id="CHEBI:57540"/>
    </ligand>
</feature>
<feature type="binding site" evidence="1">
    <location>
        <position position="158"/>
    </location>
    <ligand>
        <name>NAD(+)</name>
        <dbReference type="ChEBI" id="CHEBI:57540"/>
    </ligand>
</feature>
<feature type="binding site" evidence="1">
    <location>
        <position position="175"/>
    </location>
    <ligand>
        <name>NAD(+)</name>
        <dbReference type="ChEBI" id="CHEBI:57540"/>
    </ligand>
</feature>
<feature type="binding site" evidence="1">
    <location>
        <position position="177"/>
    </location>
    <ligand>
        <name>NAD(+)</name>
        <dbReference type="ChEBI" id="CHEBI:57540"/>
    </ligand>
</feature>
<feature type="binding site" evidence="1">
    <location>
        <begin position="188"/>
        <end position="193"/>
    </location>
    <ligand>
        <name>NAD(+)</name>
        <dbReference type="ChEBI" id="CHEBI:57540"/>
    </ligand>
</feature>
<feature type="binding site" evidence="1">
    <location>
        <position position="247"/>
    </location>
    <ligand>
        <name>NAD(+)</name>
        <dbReference type="ChEBI" id="CHEBI:57540"/>
    </ligand>
</feature>
<name>NADK_SHISS</name>
<proteinExistence type="inferred from homology"/>
<gene>
    <name evidence="1" type="primary">nadK</name>
    <name type="ordered locus">SSON_2771</name>
</gene>
<organism>
    <name type="scientific">Shigella sonnei (strain Ss046)</name>
    <dbReference type="NCBI Taxonomy" id="300269"/>
    <lineage>
        <taxon>Bacteria</taxon>
        <taxon>Pseudomonadati</taxon>
        <taxon>Pseudomonadota</taxon>
        <taxon>Gammaproteobacteria</taxon>
        <taxon>Enterobacterales</taxon>
        <taxon>Enterobacteriaceae</taxon>
        <taxon>Shigella</taxon>
    </lineage>
</organism>
<protein>
    <recommendedName>
        <fullName evidence="1">NAD kinase</fullName>
        <ecNumber evidence="1">2.7.1.23</ecNumber>
    </recommendedName>
    <alternativeName>
        <fullName evidence="1">ATP-dependent NAD kinase</fullName>
    </alternativeName>
</protein>
<evidence type="ECO:0000255" key="1">
    <source>
        <dbReference type="HAMAP-Rule" id="MF_00361"/>
    </source>
</evidence>
<dbReference type="EC" id="2.7.1.23" evidence="1"/>
<dbReference type="EMBL" id="CP000038">
    <property type="protein sequence ID" value="AAZ89388.1"/>
    <property type="molecule type" value="Genomic_DNA"/>
</dbReference>
<dbReference type="RefSeq" id="WP_001059169.1">
    <property type="nucleotide sequence ID" value="NC_007384.1"/>
</dbReference>
<dbReference type="SMR" id="Q3YYM4"/>
<dbReference type="GeneID" id="93774464"/>
<dbReference type="KEGG" id="ssn:SSON_2771"/>
<dbReference type="HOGENOM" id="CLU_008831_0_1_6"/>
<dbReference type="Proteomes" id="UP000002529">
    <property type="component" value="Chromosome"/>
</dbReference>
<dbReference type="GO" id="GO:0005737">
    <property type="term" value="C:cytoplasm"/>
    <property type="evidence" value="ECO:0007669"/>
    <property type="project" value="UniProtKB-SubCell"/>
</dbReference>
<dbReference type="GO" id="GO:0005524">
    <property type="term" value="F:ATP binding"/>
    <property type="evidence" value="ECO:0007669"/>
    <property type="project" value="UniProtKB-KW"/>
</dbReference>
<dbReference type="GO" id="GO:0046872">
    <property type="term" value="F:metal ion binding"/>
    <property type="evidence" value="ECO:0007669"/>
    <property type="project" value="UniProtKB-UniRule"/>
</dbReference>
<dbReference type="GO" id="GO:0051287">
    <property type="term" value="F:NAD binding"/>
    <property type="evidence" value="ECO:0007669"/>
    <property type="project" value="UniProtKB-ARBA"/>
</dbReference>
<dbReference type="GO" id="GO:0003951">
    <property type="term" value="F:NAD+ kinase activity"/>
    <property type="evidence" value="ECO:0007669"/>
    <property type="project" value="UniProtKB-UniRule"/>
</dbReference>
<dbReference type="GO" id="GO:0019674">
    <property type="term" value="P:NAD metabolic process"/>
    <property type="evidence" value="ECO:0007669"/>
    <property type="project" value="InterPro"/>
</dbReference>
<dbReference type="GO" id="GO:0006741">
    <property type="term" value="P:NADP biosynthetic process"/>
    <property type="evidence" value="ECO:0007669"/>
    <property type="project" value="UniProtKB-UniRule"/>
</dbReference>
<dbReference type="FunFam" id="2.60.200.30:FF:000001">
    <property type="entry name" value="NAD kinase"/>
    <property type="match status" value="1"/>
</dbReference>
<dbReference type="FunFam" id="3.40.50.10330:FF:000004">
    <property type="entry name" value="NAD kinase"/>
    <property type="match status" value="1"/>
</dbReference>
<dbReference type="Gene3D" id="3.40.50.10330">
    <property type="entry name" value="Probable inorganic polyphosphate/atp-NAD kinase, domain 1"/>
    <property type="match status" value="1"/>
</dbReference>
<dbReference type="Gene3D" id="2.60.200.30">
    <property type="entry name" value="Probable inorganic polyphosphate/atp-NAD kinase, domain 2"/>
    <property type="match status" value="1"/>
</dbReference>
<dbReference type="HAMAP" id="MF_00361">
    <property type="entry name" value="NAD_kinase"/>
    <property type="match status" value="1"/>
</dbReference>
<dbReference type="InterPro" id="IPR017438">
    <property type="entry name" value="ATP-NAD_kinase_N"/>
</dbReference>
<dbReference type="InterPro" id="IPR017437">
    <property type="entry name" value="ATP-NAD_kinase_PpnK-typ_C"/>
</dbReference>
<dbReference type="InterPro" id="IPR016064">
    <property type="entry name" value="NAD/diacylglycerol_kinase_sf"/>
</dbReference>
<dbReference type="InterPro" id="IPR002504">
    <property type="entry name" value="NADK"/>
</dbReference>
<dbReference type="NCBIfam" id="NF002306">
    <property type="entry name" value="PRK01231.1"/>
    <property type="match status" value="1"/>
</dbReference>
<dbReference type="NCBIfam" id="NF002893">
    <property type="entry name" value="PRK03378.1"/>
    <property type="match status" value="1"/>
</dbReference>
<dbReference type="PANTHER" id="PTHR20275">
    <property type="entry name" value="NAD KINASE"/>
    <property type="match status" value="1"/>
</dbReference>
<dbReference type="PANTHER" id="PTHR20275:SF0">
    <property type="entry name" value="NAD KINASE"/>
    <property type="match status" value="1"/>
</dbReference>
<dbReference type="Pfam" id="PF01513">
    <property type="entry name" value="NAD_kinase"/>
    <property type="match status" value="1"/>
</dbReference>
<dbReference type="Pfam" id="PF20143">
    <property type="entry name" value="NAD_kinase_C"/>
    <property type="match status" value="1"/>
</dbReference>
<dbReference type="SUPFAM" id="SSF111331">
    <property type="entry name" value="NAD kinase/diacylglycerol kinase-like"/>
    <property type="match status" value="1"/>
</dbReference>